<sequence length="153" mass="16692">MASFKSFLLLALLAIVSEAAPPGHASHGEADSKCPLMVKVLDAVRGIPAANLLVNVFRQTESGKWEQITSGKTTELGEIHNLTTDEQFTEGVYKIEFATKAFWGKLGLSPFHEYVDVVFTANDAGHRHYTIAVLLTPYSFSSTAIVSEPHDDL</sequence>
<comment type="function">
    <text evidence="1 3 4 6 7 8 9">Thyroid hormone-binding protein, with a much higher binding affinity for triiodothyronine (T3) than for thyroxine (T4). Probably transports triiodothyronine from the bloodstream to the brain.</text>
</comment>
<comment type="subunit">
    <text evidence="4">Homotetramer. Dimer of dimers. In the homotetramer, subunits assemble around a central channel that can accommodate two ligand molecules. Interacts with rbp4.</text>
</comment>
<comment type="subcellular location">
    <subcellularLocation>
        <location evidence="4">Secreted</location>
    </subcellularLocation>
</comment>
<comment type="tissue specificity">
    <text evidence="3 4 5">Detected in plasma (at protein level). Expressed during metamorphosis in tadpole liver, but not in tadpole brain nor adult liver. Between 1.5 and 3 days of development, also expressed in the mesoderm of the kidney.</text>
</comment>
<comment type="developmental stage">
    <text evidence="3 4">Expressed in tadpoles from premetamorphic stage 53 until the end of prometamorphic stage 60. Expression levels reach a maximum at prometamorphic stages 58 to 59, then decline gradually during metamorphic climax stages (61-66). Undetectable in adults.</text>
</comment>
<comment type="induction">
    <text evidence="10 11">The estrogen ethinylestradiol (EE2) significantly decreases expression in both male and female livers. The environmental contaminants polychlorinated biphenyls (PCBs) result in an increase in gene expression and a delay in metamorphosis.</text>
</comment>
<comment type="domain">
    <text evidence="6">The N-terminus strongly influences thyroid hormone-binding properties.</text>
</comment>
<comment type="PTM">
    <text evidence="1">Sulfonation of the reactive cysteine Cys-34 enhances the stability of the native conformation of TTR, avoiding misassembly of the protein leading to amyloid formation.</text>
</comment>
<comment type="mass spectrometry" mass="15013.0" method="MALDI" evidence="4"/>
<comment type="miscellaneous">
    <text evidence="3 4 9">A number of compounds can compete with and disrupt triiodothyronine (T3)-binding. Binds the synthetic estrogen diethylstilbestrol (DES) with the same affinity as T3. Phenolic and phenol compounds can also disrupt T3-binding, with brominated derivatives of bisphenol A (e.g. 3,3'5-tribromobisphenol A) having a higher binding affinity than the chlorinated derivatives (e.g. 3,3'5-trichlorobisphenol A), but with the bromophenols showing lower binding affinity than the chlorophenols.</text>
</comment>
<comment type="similarity">
    <text evidence="2">Belongs to the transthyretin family.</text>
</comment>
<name>TTHY_XENLA</name>
<protein>
    <recommendedName>
        <fullName evidence="14">Transthyretin</fullName>
        <shortName evidence="12">xTTR</shortName>
    </recommendedName>
    <alternativeName>
        <fullName evidence="1">Prealbumin</fullName>
    </alternativeName>
</protein>
<accession>B7ZS96</accession>
<accession>Q9W649</accession>
<reference evidence="13 15" key="1">
    <citation type="journal article" date="2000" name="Am. J. Physiol.">
        <title>Evolution of structure, ontogeny of gene expression, and function of Xenopus laevis transthyretin.</title>
        <authorList>
            <person name="Prapunpoj P."/>
            <person name="Yamauchi K."/>
            <person name="Nishiyama N."/>
            <person name="Richardson S.J."/>
            <person name="Schreiber G."/>
        </authorList>
    </citation>
    <scope>NUCLEOTIDE SEQUENCE [MRNA]</scope>
    <scope>PROTEIN SEQUENCE OF 20-24</scope>
    <scope>FUNCTION</scope>
    <scope>SUBUNIT</scope>
    <scope>INTERACTION WITH RBP4</scope>
    <scope>SUBCELLULAR LOCATION</scope>
    <scope>TISSUE SPECIFICITY</scope>
    <scope>DEVELOPMENTAL STAGE</scope>
    <scope>MASS SPECTROMETRY</scope>
    <source>
        <tissue evidence="4">Tadpole liver</tissue>
    </source>
</reference>
<reference evidence="14" key="2">
    <citation type="submission" date="2008-11" db="EMBL/GenBank/DDBJ databases">
        <authorList>
            <consortium name="NIH - Xenopus Gene Collection (XGC) project"/>
        </authorList>
    </citation>
    <scope>NUCLEOTIDE SEQUENCE [LARGE SCALE MRNA]</scope>
</reference>
<reference evidence="13" key="3">
    <citation type="journal article" date="2000" name="Gen. Comp. Endocrinol.">
        <title>Effect of diethylstilbestrol on thyroid hormone binding to amphibian transthyretins.</title>
        <authorList>
            <person name="Yamauchi K."/>
            <person name="Prapunpoj P."/>
            <person name="Richardson S.J."/>
        </authorList>
    </citation>
    <scope>FUNCTION</scope>
    <scope>INHIBITION OF TRIIODOTHYRONINE-BINDING</scope>
    <scope>TISSUE SPECIFICITY</scope>
    <scope>DEVELOPMENTAL STAGE</scope>
</reference>
<reference evidence="13" key="4">
    <citation type="journal article" date="2001" name="Mech. Dev.">
        <title>Gene expression in the embryonic Xenopus liver.</title>
        <authorList>
            <person name="Zorn A.M."/>
            <person name="Mason J."/>
        </authorList>
    </citation>
    <scope>TISSUE SPECIFICITY</scope>
</reference>
<reference evidence="13" key="5">
    <citation type="journal article" date="2002" name="Am. J. Physiol.">
        <title>Crocodile transthyretin: structure, function, and evolution.</title>
        <authorList>
            <person name="Prapunpoj P."/>
            <person name="Richardson S.J."/>
            <person name="Schreiber G."/>
        </authorList>
    </citation>
    <scope>FUNCTION</scope>
    <scope>DOMAIN</scope>
</reference>
<reference evidence="13" key="6">
    <citation type="journal article" date="2002" name="Clin. Chem. Lab. Med.">
        <title>The effects of endocrine-disrupting chemicals on thyroid hormone binding to Xenopus laevis transthyretin and thyroid hormone receptor.</title>
        <authorList>
            <person name="Yamauchi K."/>
            <person name="Eguchi R."/>
            <person name="Shimada N."/>
            <person name="Ishihara A."/>
        </authorList>
    </citation>
    <scope>FUNCTION</scope>
    <scope>INHIBITION OF TRIIODOTHYRONINE-BINDING</scope>
</reference>
<reference evidence="13" key="7">
    <citation type="journal article" date="2005" name="Toxicol. Sci.">
        <title>In vitro and in vivo analysis of the thyroid disrupting activities of phenolic and phenol compounds in Xenopus laevis.</title>
        <authorList>
            <person name="Kudo Y."/>
            <person name="Yamauchi K."/>
        </authorList>
    </citation>
    <scope>FUNCTION</scope>
    <scope>INHIBITION OF TRIIODOTHYRONINE-BINDING</scope>
</reference>
<reference evidence="13" key="8">
    <citation type="journal article" date="2006" name="Environ. Res.">
        <title>Polychlorinated biphenyl exposure delays metamorphosis and alters thyroid hormone system gene expression in developing Xenopus laevis.</title>
        <authorList>
            <person name="Lehigh Shirey E.A."/>
            <person name="Jelaso Langerveld A."/>
            <person name="Mihalko D."/>
            <person name="Ide C.F."/>
        </authorList>
    </citation>
    <scope>INDUCTION</scope>
</reference>
<reference evidence="13" key="9">
    <citation type="journal article" date="2006" name="Toxicol. Sci.">
        <title>In vitro and in vivo analysis of the thyroid system-disrupting activities of brominated phenolic and phenol compounds in Xenopus laevis.</title>
        <authorList>
            <person name="Kudo Y."/>
            <person name="Yamauchi K."/>
            <person name="Fukazawa H."/>
            <person name="Terao Y."/>
        </authorList>
    </citation>
    <scope>FUNCTION</scope>
    <scope>INHIBITION OF TRIIODOTHYRONINE-BINDING</scope>
</reference>
<reference evidence="13" key="10">
    <citation type="journal article" date="2007" name="Comp. Biochem. Physiol.">
        <title>Endocrine disrupters with (anti)estrogenic and (anti)androgenic modes of action affecting reproductive biology of Xenopus laevis: I. Effects on sex steroid levels and biomarker expression.</title>
        <authorList>
            <person name="Urbatzka R."/>
            <person name="Bottero S."/>
            <person name="Mandich A."/>
            <person name="Lutz I."/>
            <person name="Kloas W."/>
        </authorList>
    </citation>
    <scope>INDUCTION</scope>
</reference>
<evidence type="ECO:0000250" key="1">
    <source>
        <dbReference type="UniProtKB" id="P02766"/>
    </source>
</evidence>
<evidence type="ECO:0000255" key="2"/>
<evidence type="ECO:0000269" key="3">
    <source>
    </source>
</evidence>
<evidence type="ECO:0000269" key="4">
    <source>
    </source>
</evidence>
<evidence type="ECO:0000269" key="5">
    <source>
    </source>
</evidence>
<evidence type="ECO:0000269" key="6">
    <source>
    </source>
</evidence>
<evidence type="ECO:0000269" key="7">
    <source>
    </source>
</evidence>
<evidence type="ECO:0000269" key="8">
    <source>
    </source>
</evidence>
<evidence type="ECO:0000269" key="9">
    <source>
    </source>
</evidence>
<evidence type="ECO:0000269" key="10">
    <source>
    </source>
</evidence>
<evidence type="ECO:0000269" key="11">
    <source>
    </source>
</evidence>
<evidence type="ECO:0000303" key="12">
    <source>
    </source>
</evidence>
<evidence type="ECO:0000305" key="13"/>
<evidence type="ECO:0000312" key="14">
    <source>
        <dbReference type="EMBL" id="AAI70444.1"/>
    </source>
</evidence>
<evidence type="ECO:0000312" key="15">
    <source>
        <dbReference type="EMBL" id="BAA77579.1"/>
    </source>
</evidence>
<dbReference type="EMBL" id="AB026996">
    <property type="protein sequence ID" value="BAA77579.1"/>
    <property type="molecule type" value="mRNA"/>
</dbReference>
<dbReference type="EMBL" id="BC170444">
    <property type="protein sequence ID" value="AAI70444.1"/>
    <property type="molecule type" value="mRNA"/>
</dbReference>
<dbReference type="EMBL" id="BC170446">
    <property type="protein sequence ID" value="AAI70446.1"/>
    <property type="molecule type" value="mRNA"/>
</dbReference>
<dbReference type="RefSeq" id="NP_001081348.1">
    <property type="nucleotide sequence ID" value="NM_001087879.1"/>
</dbReference>
<dbReference type="SMR" id="B7ZS96"/>
<dbReference type="GlyCosmos" id="B7ZS96">
    <property type="glycosylation" value="1 site, No reported glycans"/>
</dbReference>
<dbReference type="GeneID" id="397787"/>
<dbReference type="KEGG" id="xla:397787"/>
<dbReference type="AGR" id="Xenbase:XB-GENE-865269"/>
<dbReference type="CTD" id="397787"/>
<dbReference type="Xenbase" id="XB-GENE-865269">
    <property type="gene designation" value="ttr.L"/>
</dbReference>
<dbReference type="OMA" id="AMYKVEL"/>
<dbReference type="OrthoDB" id="10265230at2759"/>
<dbReference type="Proteomes" id="UP000186698">
    <property type="component" value="Chromosome 6L"/>
</dbReference>
<dbReference type="Bgee" id="397787">
    <property type="expression patterns" value="Expressed in liver and 7 other cell types or tissues"/>
</dbReference>
<dbReference type="GO" id="GO:0005576">
    <property type="term" value="C:extracellular region"/>
    <property type="evidence" value="ECO:0000314"/>
    <property type="project" value="UniProtKB"/>
</dbReference>
<dbReference type="GO" id="GO:0005615">
    <property type="term" value="C:extracellular space"/>
    <property type="evidence" value="ECO:0000318"/>
    <property type="project" value="GO_Central"/>
</dbReference>
<dbReference type="GO" id="GO:0032991">
    <property type="term" value="C:protein-containing complex"/>
    <property type="evidence" value="ECO:0000314"/>
    <property type="project" value="UniProtKB"/>
</dbReference>
<dbReference type="GO" id="GO:0005179">
    <property type="term" value="F:hormone activity"/>
    <property type="evidence" value="ECO:0007669"/>
    <property type="project" value="UniProtKB-KW"/>
</dbReference>
<dbReference type="GO" id="GO:0042802">
    <property type="term" value="F:identical protein binding"/>
    <property type="evidence" value="ECO:0000353"/>
    <property type="project" value="UniProtKB"/>
</dbReference>
<dbReference type="GO" id="GO:0070324">
    <property type="term" value="F:thyroid hormone binding"/>
    <property type="evidence" value="ECO:0000314"/>
    <property type="project" value="UniProtKB"/>
</dbReference>
<dbReference type="GO" id="GO:0006144">
    <property type="term" value="P:purine nucleobase metabolic process"/>
    <property type="evidence" value="ECO:0000318"/>
    <property type="project" value="GO_Central"/>
</dbReference>
<dbReference type="GO" id="GO:0043627">
    <property type="term" value="P:response to estrogen"/>
    <property type="evidence" value="ECO:0000304"/>
    <property type="project" value="AgBase"/>
</dbReference>
<dbReference type="GO" id="GO:0070327">
    <property type="term" value="P:thyroid hormone transport"/>
    <property type="evidence" value="ECO:0000305"/>
    <property type="project" value="UniProtKB"/>
</dbReference>
<dbReference type="CDD" id="cd05821">
    <property type="entry name" value="TLP_Transthyretin"/>
    <property type="match status" value="1"/>
</dbReference>
<dbReference type="FunFam" id="2.60.40.180:FF:000002">
    <property type="entry name" value="Transthyretin"/>
    <property type="match status" value="1"/>
</dbReference>
<dbReference type="Gene3D" id="2.60.40.180">
    <property type="entry name" value="Transthyretin/hydroxyisourate hydrolase domain"/>
    <property type="match status" value="1"/>
</dbReference>
<dbReference type="InterPro" id="IPR023418">
    <property type="entry name" value="Thyroxine_BS"/>
</dbReference>
<dbReference type="InterPro" id="IPR000895">
    <property type="entry name" value="Transthyretin/HIU_hydrolase"/>
</dbReference>
<dbReference type="InterPro" id="IPR023416">
    <property type="entry name" value="Transthyretin/HIU_hydrolase_d"/>
</dbReference>
<dbReference type="InterPro" id="IPR036817">
    <property type="entry name" value="Transthyretin/HIU_hydrolase_sf"/>
</dbReference>
<dbReference type="InterPro" id="IPR023419">
    <property type="entry name" value="Transthyretin_CS"/>
</dbReference>
<dbReference type="PANTHER" id="PTHR10395:SF12">
    <property type="entry name" value="TRANSTHYRETIN"/>
    <property type="match status" value="1"/>
</dbReference>
<dbReference type="PANTHER" id="PTHR10395">
    <property type="entry name" value="URICASE AND TRANSTHYRETIN-RELATED"/>
    <property type="match status" value="1"/>
</dbReference>
<dbReference type="Pfam" id="PF00576">
    <property type="entry name" value="Transthyretin"/>
    <property type="match status" value="1"/>
</dbReference>
<dbReference type="PRINTS" id="PR00189">
    <property type="entry name" value="TRNSTHYRETIN"/>
</dbReference>
<dbReference type="SMART" id="SM00095">
    <property type="entry name" value="TR_THY"/>
    <property type="match status" value="1"/>
</dbReference>
<dbReference type="SUPFAM" id="SSF49472">
    <property type="entry name" value="Transthyretin (synonym: prealbumin)"/>
    <property type="match status" value="1"/>
</dbReference>
<dbReference type="PROSITE" id="PS00768">
    <property type="entry name" value="TRANSTHYRETIN_1"/>
    <property type="match status" value="1"/>
</dbReference>
<dbReference type="PROSITE" id="PS00769">
    <property type="entry name" value="TRANSTHYRETIN_2"/>
    <property type="match status" value="1"/>
</dbReference>
<organism>
    <name type="scientific">Xenopus laevis</name>
    <name type="common">African clawed frog</name>
    <dbReference type="NCBI Taxonomy" id="8355"/>
    <lineage>
        <taxon>Eukaryota</taxon>
        <taxon>Metazoa</taxon>
        <taxon>Chordata</taxon>
        <taxon>Craniata</taxon>
        <taxon>Vertebrata</taxon>
        <taxon>Euteleostomi</taxon>
        <taxon>Amphibia</taxon>
        <taxon>Batrachia</taxon>
        <taxon>Anura</taxon>
        <taxon>Pipoidea</taxon>
        <taxon>Pipidae</taxon>
        <taxon>Xenopodinae</taxon>
        <taxon>Xenopus</taxon>
        <taxon>Xenopus</taxon>
    </lineage>
</organism>
<keyword id="KW-0903">Direct protein sequencing</keyword>
<keyword id="KW-0325">Glycoprotein</keyword>
<keyword id="KW-0372">Hormone</keyword>
<keyword id="KW-1185">Reference proteome</keyword>
<keyword id="KW-0964">Secreted</keyword>
<keyword id="KW-0732">Signal</keyword>
<keyword id="KW-0765">Sulfation</keyword>
<keyword id="KW-0795">Thyroid hormone</keyword>
<keyword id="KW-0813">Transport</keyword>
<feature type="signal peptide" evidence="4">
    <location>
        <begin position="1"/>
        <end position="19"/>
    </location>
</feature>
<feature type="chain" id="PRO_0000389429" description="Transthyretin" evidence="4">
    <location>
        <begin position="20"/>
        <end position="153"/>
    </location>
</feature>
<feature type="binding site" evidence="1">
    <location>
        <position position="39"/>
    </location>
    <ligand>
        <name>L-thyroxine</name>
        <dbReference type="ChEBI" id="CHEBI:58448"/>
    </ligand>
</feature>
<feature type="binding site" evidence="1">
    <location>
        <position position="78"/>
    </location>
    <ligand>
        <name>L-thyroxine</name>
        <dbReference type="ChEBI" id="CHEBI:58448"/>
    </ligand>
</feature>
<feature type="binding site" evidence="1">
    <location>
        <position position="141"/>
    </location>
    <ligand>
        <name>L-thyroxine</name>
        <dbReference type="ChEBI" id="CHEBI:58448"/>
    </ligand>
</feature>
<feature type="modified residue" description="Sulfocysteine" evidence="1">
    <location>
        <position position="34"/>
    </location>
</feature>
<feature type="glycosylation site" description="N-linked (GlcNAc...) asparagine" evidence="2">
    <location>
        <position position="81"/>
    </location>
</feature>
<feature type="sequence conflict" description="In Ref. 1; BAA77579." evidence="13" ref="1">
    <original>H</original>
    <variation>Q</variation>
    <location>
        <position position="128"/>
    </location>
</feature>
<gene>
    <name type="primary">ttr</name>
</gene>
<proteinExistence type="evidence at protein level"/>